<dbReference type="EMBL" id="DQ447649">
    <property type="protein sequence ID" value="ABE27073.1"/>
    <property type="molecule type" value="Genomic_RNA"/>
</dbReference>
<dbReference type="SMR" id="Q1PDC5"/>
<dbReference type="Proteomes" id="UP000008239">
    <property type="component" value="Genome"/>
</dbReference>
<dbReference type="GO" id="GO:0033645">
    <property type="term" value="C:host cell endomembrane system"/>
    <property type="evidence" value="ECO:0007669"/>
    <property type="project" value="UniProtKB-SubCell"/>
</dbReference>
<dbReference type="GO" id="GO:0020002">
    <property type="term" value="C:host cell plasma membrane"/>
    <property type="evidence" value="ECO:0007669"/>
    <property type="project" value="UniProtKB-SubCell"/>
</dbReference>
<dbReference type="GO" id="GO:0016020">
    <property type="term" value="C:membrane"/>
    <property type="evidence" value="ECO:0007669"/>
    <property type="project" value="UniProtKB-KW"/>
</dbReference>
<dbReference type="GO" id="GO:0055036">
    <property type="term" value="C:virion membrane"/>
    <property type="evidence" value="ECO:0007669"/>
    <property type="project" value="UniProtKB-SubCell"/>
</dbReference>
<dbReference type="GO" id="GO:0039660">
    <property type="term" value="F:structural constituent of virion"/>
    <property type="evidence" value="ECO:0007669"/>
    <property type="project" value="UniProtKB-KW"/>
</dbReference>
<dbReference type="GO" id="GO:0016032">
    <property type="term" value="P:viral process"/>
    <property type="evidence" value="ECO:0007669"/>
    <property type="project" value="InterPro"/>
</dbReference>
<dbReference type="InterPro" id="IPR009433">
    <property type="entry name" value="Filo_VP24"/>
</dbReference>
<dbReference type="Pfam" id="PF06389">
    <property type="entry name" value="Filo_VP24"/>
    <property type="match status" value="1"/>
</dbReference>
<dbReference type="PIRSF" id="PIRSF011355">
    <property type="entry name" value="VP24"/>
    <property type="match status" value="1"/>
</dbReference>
<gene>
    <name type="primary">VP24</name>
</gene>
<reference key="1">
    <citation type="journal article" date="2006" name="J. Virol.">
        <title>Marburgvirus genomics and association with a large hemorrhagic fever outbreak in Angola.</title>
        <authorList>
            <person name="Towner J.S."/>
            <person name="Khristova M.L."/>
            <person name="Sealy T.K."/>
            <person name="Vincent M.J."/>
            <person name="Erickson B.R."/>
            <person name="Bawiec D.A."/>
            <person name="Hartman A.L."/>
            <person name="Comer J.A."/>
            <person name="Zaki S.R."/>
            <person name="Stroeher U."/>
            <person name="Gomes da Silva F."/>
            <person name="del Castillo F."/>
            <person name="Rollin P.E."/>
            <person name="Ksiazek T.G."/>
            <person name="Nichol S.T."/>
        </authorList>
    </citation>
    <scope>NUCLEOTIDE SEQUENCE [GENOMIC RNA]</scope>
</reference>
<keyword id="KW-1032">Host cell membrane</keyword>
<keyword id="KW-1043">Host membrane</keyword>
<keyword id="KW-0472">Membrane</keyword>
<keyword id="KW-0468">Viral matrix protein</keyword>
<keyword id="KW-0946">Virion</keyword>
<organism>
    <name type="scientific">Lake Victoria marburgvirus (strain Ravn-87)</name>
    <name type="common">MARV</name>
    <name type="synonym">Marburg virus (strain Kenya/Ravn/1987)</name>
    <dbReference type="NCBI Taxonomy" id="378809"/>
    <lineage>
        <taxon>Viruses</taxon>
        <taxon>Riboviria</taxon>
        <taxon>Orthornavirae</taxon>
        <taxon>Negarnaviricota</taxon>
        <taxon>Haploviricotina</taxon>
        <taxon>Monjiviricetes</taxon>
        <taxon>Mononegavirales</taxon>
        <taxon>Filoviridae</taxon>
        <taxon>Orthomarburgvirus</taxon>
        <taxon>Orthomarburgvirus marburgense</taxon>
    </lineage>
</organism>
<proteinExistence type="inferred from homology"/>
<protein>
    <recommendedName>
        <fullName>Membrane-associated protein VP24</fullName>
    </recommendedName>
    <alternativeName>
        <fullName>Marburg VP24</fullName>
        <shortName>mVP24</shortName>
    </alternativeName>
</protein>
<feature type="chain" id="PRO_0000314991" description="Membrane-associated protein VP24">
    <location>
        <begin position="1"/>
        <end position="253"/>
    </location>
</feature>
<accession>Q1PDC5</accession>
<sequence>MAELSTRYNLPTNITEKSINLDLNSTARWVKEPSVGGWTVKWGNFIFHIPNTGMTLLHHLKSNFVVPEWQQTRSLFSHLFKNPKSTIMEPFLALRILLGVALKDQELQQSLIPGFRSIVHMLSEWLLLEVTSAIHISPNLLGIYLTSDMFKILMAGVKNFFNKLFTLHVVNDHGKPSSIEIKLTGQQIIITRVNMGFLVEVRRIDIEPCCGETVLSESVVFGLVAEAVLREHSQIERGQPLNLTQYMNSKIAI</sequence>
<organismHost>
    <name type="scientific">Chlorocebus aethiops</name>
    <name type="common">Green monkey</name>
    <name type="synonym">Cercopithecus aethiops</name>
    <dbReference type="NCBI Taxonomy" id="9534"/>
</organismHost>
<organismHost>
    <name type="scientific">Homo sapiens</name>
    <name type="common">Human</name>
    <dbReference type="NCBI Taxonomy" id="9606"/>
</organismHost>
<organismHost>
    <name type="scientific">Rousettus aegyptiacus</name>
    <name type="common">Egyptian fruit bat</name>
    <name type="synonym">Pteropus aegyptiacus</name>
    <dbReference type="NCBI Taxonomy" id="9407"/>
</organismHost>
<name>VP24_MABVR</name>
<comment type="function">
    <text evidence="2">May act as a minor matrix protein that plays a role in assembly of viral nucleocapsid and virion budding. Unlike Ebola VP24, mVP24 has no measurable impact of host dendritic cell function.</text>
</comment>
<comment type="subunit">
    <text evidence="1 3">Monomer or homotetramer (Potential). Interacts with the nucleoprotein (By similarity).</text>
</comment>
<comment type="subcellular location">
    <subcellularLocation>
        <location evidence="1">Virion membrane</location>
        <topology evidence="1">Peripheral membrane protein</topology>
    </subcellularLocation>
    <subcellularLocation>
        <location evidence="1">Host cell membrane</location>
        <topology evidence="1">Peripheral membrane protein</topology>
        <orientation evidence="1">Cytoplasmic side</orientation>
    </subcellularLocation>
    <subcellularLocation>
        <location evidence="1">Host endomembrane system</location>
        <topology evidence="1">Peripheral membrane protein</topology>
    </subcellularLocation>
    <text evidence="1">In virion, localizes on the intravirional side of the membrane. In the host cell, it is found associated with virus-induced membrane proliferation foci and to the plasma membrane where budding takes place (By similarity).</text>
</comment>
<comment type="similarity">
    <text evidence="3">Belongs to the filoviridae membrane-associated protein VP24 family.</text>
</comment>
<evidence type="ECO:0000250" key="1"/>
<evidence type="ECO:0000250" key="2">
    <source>
        <dbReference type="UniProtKB" id="P35256"/>
    </source>
</evidence>
<evidence type="ECO:0000305" key="3"/>